<gene>
    <name evidence="1" type="primary">rpsG</name>
    <name type="ordered locus">SYNAS_02980</name>
    <name type="ORF">SYN_03255</name>
</gene>
<dbReference type="EMBL" id="CP000252">
    <property type="protein sequence ID" value="ABC76177.1"/>
    <property type="status" value="ALT_INIT"/>
    <property type="molecule type" value="Genomic_DNA"/>
</dbReference>
<dbReference type="RefSeq" id="WP_041584589.1">
    <property type="nucleotide sequence ID" value="NC_007759.1"/>
</dbReference>
<dbReference type="SMR" id="Q2LQA4"/>
<dbReference type="FunCoup" id="Q2LQA4">
    <property type="interactions" value="603"/>
</dbReference>
<dbReference type="STRING" id="56780.SYN_03255"/>
<dbReference type="KEGG" id="sat:SYN_03255"/>
<dbReference type="eggNOG" id="COG0049">
    <property type="taxonomic scope" value="Bacteria"/>
</dbReference>
<dbReference type="HOGENOM" id="CLU_072226_1_1_7"/>
<dbReference type="InParanoid" id="Q2LQA4"/>
<dbReference type="OrthoDB" id="9807653at2"/>
<dbReference type="Proteomes" id="UP000001933">
    <property type="component" value="Chromosome"/>
</dbReference>
<dbReference type="GO" id="GO:0015935">
    <property type="term" value="C:small ribosomal subunit"/>
    <property type="evidence" value="ECO:0007669"/>
    <property type="project" value="InterPro"/>
</dbReference>
<dbReference type="GO" id="GO:0019843">
    <property type="term" value="F:rRNA binding"/>
    <property type="evidence" value="ECO:0007669"/>
    <property type="project" value="UniProtKB-UniRule"/>
</dbReference>
<dbReference type="GO" id="GO:0003735">
    <property type="term" value="F:structural constituent of ribosome"/>
    <property type="evidence" value="ECO:0007669"/>
    <property type="project" value="InterPro"/>
</dbReference>
<dbReference type="GO" id="GO:0000049">
    <property type="term" value="F:tRNA binding"/>
    <property type="evidence" value="ECO:0007669"/>
    <property type="project" value="UniProtKB-UniRule"/>
</dbReference>
<dbReference type="GO" id="GO:0006412">
    <property type="term" value="P:translation"/>
    <property type="evidence" value="ECO:0007669"/>
    <property type="project" value="UniProtKB-UniRule"/>
</dbReference>
<dbReference type="CDD" id="cd14869">
    <property type="entry name" value="uS7_Bacteria"/>
    <property type="match status" value="1"/>
</dbReference>
<dbReference type="FunFam" id="1.10.455.10:FF:000001">
    <property type="entry name" value="30S ribosomal protein S7"/>
    <property type="match status" value="1"/>
</dbReference>
<dbReference type="Gene3D" id="1.10.455.10">
    <property type="entry name" value="Ribosomal protein S7 domain"/>
    <property type="match status" value="1"/>
</dbReference>
<dbReference type="HAMAP" id="MF_00480_B">
    <property type="entry name" value="Ribosomal_uS7_B"/>
    <property type="match status" value="1"/>
</dbReference>
<dbReference type="InterPro" id="IPR000235">
    <property type="entry name" value="Ribosomal_uS7"/>
</dbReference>
<dbReference type="InterPro" id="IPR005717">
    <property type="entry name" value="Ribosomal_uS7_bac/org-type"/>
</dbReference>
<dbReference type="InterPro" id="IPR020606">
    <property type="entry name" value="Ribosomal_uS7_CS"/>
</dbReference>
<dbReference type="InterPro" id="IPR023798">
    <property type="entry name" value="Ribosomal_uS7_dom"/>
</dbReference>
<dbReference type="InterPro" id="IPR036823">
    <property type="entry name" value="Ribosomal_uS7_dom_sf"/>
</dbReference>
<dbReference type="NCBIfam" id="TIGR01029">
    <property type="entry name" value="rpsG_bact"/>
    <property type="match status" value="1"/>
</dbReference>
<dbReference type="PANTHER" id="PTHR11205">
    <property type="entry name" value="RIBOSOMAL PROTEIN S7"/>
    <property type="match status" value="1"/>
</dbReference>
<dbReference type="Pfam" id="PF00177">
    <property type="entry name" value="Ribosomal_S7"/>
    <property type="match status" value="1"/>
</dbReference>
<dbReference type="PIRSF" id="PIRSF002122">
    <property type="entry name" value="RPS7p_RPS7a_RPS5e_RPS7o"/>
    <property type="match status" value="1"/>
</dbReference>
<dbReference type="SUPFAM" id="SSF47973">
    <property type="entry name" value="Ribosomal protein S7"/>
    <property type="match status" value="1"/>
</dbReference>
<dbReference type="PROSITE" id="PS00052">
    <property type="entry name" value="RIBOSOMAL_S7"/>
    <property type="match status" value="1"/>
</dbReference>
<keyword id="KW-1185">Reference proteome</keyword>
<keyword id="KW-0687">Ribonucleoprotein</keyword>
<keyword id="KW-0689">Ribosomal protein</keyword>
<keyword id="KW-0694">RNA-binding</keyword>
<keyword id="KW-0699">rRNA-binding</keyword>
<keyword id="KW-0820">tRNA-binding</keyword>
<evidence type="ECO:0000255" key="1">
    <source>
        <dbReference type="HAMAP-Rule" id="MF_00480"/>
    </source>
</evidence>
<evidence type="ECO:0000305" key="2"/>
<comment type="function">
    <text evidence="1">One of the primary rRNA binding proteins, it binds directly to 16S rRNA where it nucleates assembly of the head domain of the 30S subunit. Is located at the subunit interface close to the decoding center, probably blocks exit of the E-site tRNA.</text>
</comment>
<comment type="subunit">
    <text evidence="1">Part of the 30S ribosomal subunit. Contacts proteins S9 and S11.</text>
</comment>
<comment type="similarity">
    <text evidence="1">Belongs to the universal ribosomal protein uS7 family.</text>
</comment>
<comment type="sequence caution" evidence="2">
    <conflict type="erroneous initiation">
        <sequence resource="EMBL-CDS" id="ABC76177"/>
    </conflict>
</comment>
<accession>Q2LQA4</accession>
<feature type="chain" id="PRO_0000241784" description="Small ribosomal subunit protein uS7">
    <location>
        <begin position="1"/>
        <end position="156"/>
    </location>
</feature>
<proteinExistence type="inferred from homology"/>
<sequence>MPRRREIAKRVILPDPKYKNILVAKFVNNLLKEGKKSIAESILYGAFDLIEKKAKESPVELFERAVNNVKPVIEVKSRRVGGSTYQVPTEVAASRRVALAIRWIISNAKDRAEKTMREKLAGEFIDAANNRGGSIKKRESVHKMAEANKAFAHYRF</sequence>
<reference key="1">
    <citation type="journal article" date="2007" name="Proc. Natl. Acad. Sci. U.S.A.">
        <title>The genome of Syntrophus aciditrophicus: life at the thermodynamic limit of microbial growth.</title>
        <authorList>
            <person name="McInerney M.J."/>
            <person name="Rohlin L."/>
            <person name="Mouttaki H."/>
            <person name="Kim U."/>
            <person name="Krupp R.S."/>
            <person name="Rios-Hernandez L."/>
            <person name="Sieber J."/>
            <person name="Struchtemeyer C.G."/>
            <person name="Bhattacharyya A."/>
            <person name="Campbell J.W."/>
            <person name="Gunsalus R.P."/>
        </authorList>
    </citation>
    <scope>NUCLEOTIDE SEQUENCE [LARGE SCALE GENOMIC DNA]</scope>
    <source>
        <strain>SB</strain>
    </source>
</reference>
<name>RS7_SYNAS</name>
<protein>
    <recommendedName>
        <fullName evidence="1">Small ribosomal subunit protein uS7</fullName>
    </recommendedName>
    <alternativeName>
        <fullName evidence="2">30S ribosomal protein S7</fullName>
    </alternativeName>
</protein>
<organism>
    <name type="scientific">Syntrophus aciditrophicus (strain SB)</name>
    <dbReference type="NCBI Taxonomy" id="56780"/>
    <lineage>
        <taxon>Bacteria</taxon>
        <taxon>Pseudomonadati</taxon>
        <taxon>Thermodesulfobacteriota</taxon>
        <taxon>Syntrophia</taxon>
        <taxon>Syntrophales</taxon>
        <taxon>Syntrophaceae</taxon>
        <taxon>Syntrophus</taxon>
    </lineage>
</organism>